<proteinExistence type="evidence at transcript level"/>
<accession>P23767</accession>
<feature type="chain" id="PRO_0000083401" description="GATA-binding factor 1-A">
    <location>
        <begin position="1"/>
        <end position="359"/>
    </location>
</feature>
<feature type="zinc finger region" description="GATA-type 1" evidence="2">
    <location>
        <begin position="178"/>
        <end position="202"/>
    </location>
</feature>
<feature type="zinc finger region" description="GATA-type 2" evidence="2">
    <location>
        <begin position="232"/>
        <end position="256"/>
    </location>
</feature>
<feature type="region of interest" description="Disordered" evidence="3">
    <location>
        <begin position="1"/>
        <end position="21"/>
    </location>
</feature>
<feature type="region of interest" description="Disordered" evidence="3">
    <location>
        <begin position="271"/>
        <end position="311"/>
    </location>
</feature>
<feature type="region of interest" description="Disordered" evidence="3">
    <location>
        <begin position="323"/>
        <end position="359"/>
    </location>
</feature>
<feature type="compositionally biased region" description="Basic residues" evidence="3">
    <location>
        <begin position="279"/>
        <end position="291"/>
    </location>
</feature>
<gene>
    <name type="primary">gata1-a</name>
    <name type="synonym">gata1a</name>
</gene>
<evidence type="ECO:0000250" key="1">
    <source>
        <dbReference type="UniProtKB" id="P15976"/>
    </source>
</evidence>
<evidence type="ECO:0000255" key="2">
    <source>
        <dbReference type="PROSITE-ProRule" id="PRU00094"/>
    </source>
</evidence>
<evidence type="ECO:0000256" key="3">
    <source>
        <dbReference type="SAM" id="MobiDB-lite"/>
    </source>
</evidence>
<evidence type="ECO:0000269" key="4">
    <source>
    </source>
</evidence>
<evidence type="ECO:0000269" key="5">
    <source>
    </source>
</evidence>
<organism>
    <name type="scientific">Xenopus laevis</name>
    <name type="common">African clawed frog</name>
    <dbReference type="NCBI Taxonomy" id="8355"/>
    <lineage>
        <taxon>Eukaryota</taxon>
        <taxon>Metazoa</taxon>
        <taxon>Chordata</taxon>
        <taxon>Craniata</taxon>
        <taxon>Vertebrata</taxon>
        <taxon>Euteleostomi</taxon>
        <taxon>Amphibia</taxon>
        <taxon>Batrachia</taxon>
        <taxon>Anura</taxon>
        <taxon>Pipoidea</taxon>
        <taxon>Pipidae</taxon>
        <taxon>Xenopodinae</taxon>
        <taxon>Xenopus</taxon>
        <taxon>Xenopus</taxon>
    </lineage>
</organism>
<keyword id="KW-0010">Activator</keyword>
<keyword id="KW-0238">DNA-binding</keyword>
<keyword id="KW-0479">Metal-binding</keyword>
<keyword id="KW-0539">Nucleus</keyword>
<keyword id="KW-1185">Reference proteome</keyword>
<keyword id="KW-0677">Repeat</keyword>
<keyword id="KW-0804">Transcription</keyword>
<keyword id="KW-0805">Transcription regulation</keyword>
<keyword id="KW-0862">Zinc</keyword>
<keyword id="KW-0863">Zinc-finger</keyword>
<name>GAT1A_XENLA</name>
<comment type="function">
    <text evidence="4">Transcription factor that acts synergistically with tal1/scl and lmo2 to specify embryonic dorsal mesoderm to a hematopoietic fate.</text>
</comment>
<comment type="subcellular location">
    <subcellularLocation>
        <location evidence="1">Nucleus</location>
    </subcellularLocation>
</comment>
<comment type="tissue specificity">
    <text evidence="5">Expressed in the developing ventral blood island, and in both tadpole and adult erythrocytes.</text>
</comment>
<comment type="developmental stage">
    <text evidence="5">Expressed zygotically by embryonic stage 11 (mid-gastrula).</text>
</comment>
<dbReference type="EMBL" id="M76566">
    <property type="protein sequence ID" value="AAA49721.1"/>
    <property type="molecule type" value="mRNA"/>
</dbReference>
<dbReference type="PIR" id="A41602">
    <property type="entry name" value="A41602"/>
</dbReference>
<dbReference type="RefSeq" id="NP_001079109.1">
    <property type="nucleotide sequence ID" value="NM_001085640.1"/>
</dbReference>
<dbReference type="SMR" id="P23767"/>
<dbReference type="GeneID" id="373642"/>
<dbReference type="KEGG" id="xla:373642"/>
<dbReference type="AGR" id="Xenbase:XB-GENE-865107"/>
<dbReference type="CTD" id="373642"/>
<dbReference type="Xenbase" id="XB-GENE-865107">
    <property type="gene designation" value="gata1.L"/>
</dbReference>
<dbReference type="OrthoDB" id="515401at2759"/>
<dbReference type="Proteomes" id="UP000186698">
    <property type="component" value="Chromosome 8L"/>
</dbReference>
<dbReference type="Bgee" id="373642">
    <property type="expression patterns" value="Expressed in lung and 13 other cell types or tissues"/>
</dbReference>
<dbReference type="GO" id="GO:0005634">
    <property type="term" value="C:nucleus"/>
    <property type="evidence" value="ECO:0000318"/>
    <property type="project" value="GO_Central"/>
</dbReference>
<dbReference type="GO" id="GO:0000981">
    <property type="term" value="F:DNA-binding transcription factor activity, RNA polymerase II-specific"/>
    <property type="evidence" value="ECO:0000318"/>
    <property type="project" value="GO_Central"/>
</dbReference>
<dbReference type="GO" id="GO:0000978">
    <property type="term" value="F:RNA polymerase II cis-regulatory region sequence-specific DNA binding"/>
    <property type="evidence" value="ECO:0000318"/>
    <property type="project" value="GO_Central"/>
</dbReference>
<dbReference type="GO" id="GO:0008270">
    <property type="term" value="F:zinc ion binding"/>
    <property type="evidence" value="ECO:0007669"/>
    <property type="project" value="UniProtKB-KW"/>
</dbReference>
<dbReference type="GO" id="GO:0045165">
    <property type="term" value="P:cell fate commitment"/>
    <property type="evidence" value="ECO:0000318"/>
    <property type="project" value="GO_Central"/>
</dbReference>
<dbReference type="GO" id="GO:0030218">
    <property type="term" value="P:erythrocyte differentiation"/>
    <property type="evidence" value="ECO:0000316"/>
    <property type="project" value="UniProtKB"/>
</dbReference>
<dbReference type="GO" id="GO:0000122">
    <property type="term" value="P:negative regulation of transcription by RNA polymerase II"/>
    <property type="evidence" value="ECO:0000318"/>
    <property type="project" value="GO_Central"/>
</dbReference>
<dbReference type="GO" id="GO:0045944">
    <property type="term" value="P:positive regulation of transcription by RNA polymerase II"/>
    <property type="evidence" value="ECO:0000318"/>
    <property type="project" value="GO_Central"/>
</dbReference>
<dbReference type="CDD" id="cd00202">
    <property type="entry name" value="ZnF_GATA"/>
    <property type="match status" value="2"/>
</dbReference>
<dbReference type="FunFam" id="3.30.50.10:FF:000001">
    <property type="entry name" value="GATA transcription factor (GATAd)"/>
    <property type="match status" value="1"/>
</dbReference>
<dbReference type="FunFam" id="3.30.50.10:FF:000032">
    <property type="entry name" value="Transcription factor GATA-3"/>
    <property type="match status" value="1"/>
</dbReference>
<dbReference type="Gene3D" id="3.30.50.10">
    <property type="entry name" value="Erythroid Transcription Factor GATA-1, subunit A"/>
    <property type="match status" value="2"/>
</dbReference>
<dbReference type="InterPro" id="IPR039355">
    <property type="entry name" value="Transcription_factor_GATA"/>
</dbReference>
<dbReference type="InterPro" id="IPR000679">
    <property type="entry name" value="Znf_GATA"/>
</dbReference>
<dbReference type="InterPro" id="IPR013088">
    <property type="entry name" value="Znf_NHR/GATA"/>
</dbReference>
<dbReference type="PANTHER" id="PTHR10071:SF190">
    <property type="entry name" value="ERYTHROID TRANSCRIPTION FACTOR"/>
    <property type="match status" value="1"/>
</dbReference>
<dbReference type="PANTHER" id="PTHR10071">
    <property type="entry name" value="TRANSCRIPTION FACTOR GATA FAMILY MEMBER"/>
    <property type="match status" value="1"/>
</dbReference>
<dbReference type="Pfam" id="PF00320">
    <property type="entry name" value="GATA"/>
    <property type="match status" value="2"/>
</dbReference>
<dbReference type="PRINTS" id="PR00619">
    <property type="entry name" value="GATAZNFINGER"/>
</dbReference>
<dbReference type="SMART" id="SM00401">
    <property type="entry name" value="ZnF_GATA"/>
    <property type="match status" value="2"/>
</dbReference>
<dbReference type="SUPFAM" id="SSF57716">
    <property type="entry name" value="Glucocorticoid receptor-like (DNA-binding domain)"/>
    <property type="match status" value="2"/>
</dbReference>
<dbReference type="PROSITE" id="PS00344">
    <property type="entry name" value="GATA_ZN_FINGER_1"/>
    <property type="match status" value="2"/>
</dbReference>
<dbReference type="PROSITE" id="PS50114">
    <property type="entry name" value="GATA_ZN_FINGER_2"/>
    <property type="match status" value="2"/>
</dbReference>
<protein>
    <recommendedName>
        <fullName>GATA-binding factor 1-A</fullName>
    </recommendedName>
    <alternativeName>
        <fullName>Transcription factor xGATA-1A</fullName>
    </alternativeName>
</protein>
<reference key="1">
    <citation type="journal article" date="1991" name="Proc. Natl. Acad. Sci. U.S.A.">
        <title>Expression of GATA-binding proteins during embryonic development in Xenopus laevis.</title>
        <authorList>
            <person name="Zon L.I."/>
            <person name="Mather C."/>
            <person name="Burgess S."/>
            <person name="Bolce M.E."/>
            <person name="Harland R.M."/>
            <person name="Orkin S.H."/>
        </authorList>
    </citation>
    <scope>NUCLEOTIDE SEQUENCE [MRNA]</scope>
    <scope>TISSUE SPECIFICITY</scope>
    <scope>DEVELOPMENTAL STAGE</scope>
    <source>
        <tissue>Erythrocyte</tissue>
    </source>
</reference>
<reference key="2">
    <citation type="journal article" date="2001" name="Development">
        <title>Primitive erythropoiesis in the Xenopus embryo: the synergistic role of LMO-2, SCL and GATA-binding proteins.</title>
        <authorList>
            <person name="Mead P.E."/>
            <person name="Deconinck A.E."/>
            <person name="Huber T.L."/>
            <person name="Orkin S.H."/>
            <person name="Zon L.I."/>
        </authorList>
    </citation>
    <scope>FUNCTION</scope>
</reference>
<sequence>MDYTTLTTQDPDPNYTESGLASTSEDSQFLYGLGGESSPGHYGGAVSSRAVGGFRHSPVFQTFPLHWPETSAGIPSNLTAYGRSTGTLSFYPSAASALGPITSPPLYSASSFLLGSAPPAEREGSPKFLETLKTERASPLTSDLLPLEPRSPSILQVGYIGGGGQEFSLFQSTEDRECVNCGATVTPLWRRDMSGHYLCNACGLYHKMNGQNRPLIRPKKRLIVSKRAGTQCSNCHTSTTTLWRRNASGDPVCNACGLYYKLHNVNRPLTMKKEGIQTRNRKVSSRSKKKKQLDNPFEPPKAGVEEPSPYPFGPLLFHGQMPPMGHMINPPHHFLQSPRISHSAPAVSYRQAASGVTPP</sequence>